<feature type="signal peptide" evidence="2">
    <location>
        <begin position="1"/>
        <end position="18"/>
    </location>
</feature>
<feature type="propeptide" id="PRO_0000295827" evidence="1">
    <location>
        <begin position="19"/>
        <end position="24"/>
    </location>
</feature>
<feature type="chain" id="PRO_5000061219" description="Snake venom serine protease KN2">
    <location>
        <begin position="25"/>
        <end position="257"/>
    </location>
</feature>
<feature type="domain" description="Peptidase S1" evidence="3">
    <location>
        <begin position="25"/>
        <end position="248"/>
    </location>
</feature>
<feature type="active site" description="Charge relay system" evidence="1">
    <location>
        <position position="64"/>
    </location>
</feature>
<feature type="active site" description="Charge relay system" evidence="1">
    <location>
        <position position="109"/>
    </location>
</feature>
<feature type="active site" description="Charge relay system" evidence="1">
    <location>
        <position position="203"/>
    </location>
</feature>
<feature type="glycosylation site" description="N-linked (GlcNAc...) asparagine" evidence="2">
    <location>
        <position position="120"/>
    </location>
</feature>
<feature type="glycosylation site" description="N-linked (GlcNAc...) asparagine" evidence="2">
    <location>
        <position position="121"/>
    </location>
</feature>
<feature type="disulfide bond" evidence="3">
    <location>
        <begin position="31"/>
        <end position="162"/>
    </location>
</feature>
<feature type="disulfide bond" evidence="3">
    <location>
        <begin position="49"/>
        <end position="65"/>
    </location>
</feature>
<feature type="disulfide bond" evidence="3">
    <location>
        <begin position="97"/>
        <end position="255"/>
    </location>
</feature>
<feature type="disulfide bond" evidence="3">
    <location>
        <begin position="141"/>
        <end position="209"/>
    </location>
</feature>
<feature type="disulfide bond" evidence="3">
    <location>
        <begin position="173"/>
        <end position="188"/>
    </location>
</feature>
<feature type="disulfide bond" evidence="3">
    <location>
        <begin position="199"/>
        <end position="224"/>
    </location>
</feature>
<organism>
    <name type="scientific">Trimeresurus stejnegeri</name>
    <name type="common">Chinese green tree viper</name>
    <name type="synonym">Viridovipera stejnegeri</name>
    <dbReference type="NCBI Taxonomy" id="39682"/>
    <lineage>
        <taxon>Eukaryota</taxon>
        <taxon>Metazoa</taxon>
        <taxon>Chordata</taxon>
        <taxon>Craniata</taxon>
        <taxon>Vertebrata</taxon>
        <taxon>Euteleostomi</taxon>
        <taxon>Lepidosauria</taxon>
        <taxon>Squamata</taxon>
        <taxon>Bifurcata</taxon>
        <taxon>Unidentata</taxon>
        <taxon>Episquamata</taxon>
        <taxon>Toxicofera</taxon>
        <taxon>Serpentes</taxon>
        <taxon>Colubroidea</taxon>
        <taxon>Viperidae</taxon>
        <taxon>Crotalinae</taxon>
        <taxon>Trimeresurus</taxon>
    </lineage>
</organism>
<name>VSP02_TRIST</name>
<comment type="function">
    <text evidence="1">Snake venom serine protease that may act in the hemostasis system of the prey.</text>
</comment>
<comment type="subunit">
    <text evidence="1">Monomer.</text>
</comment>
<comment type="subcellular location">
    <subcellularLocation>
        <location evidence="1">Secreted</location>
    </subcellularLocation>
</comment>
<comment type="tissue specificity">
    <text>Expressed by the venom gland.</text>
</comment>
<comment type="similarity">
    <text evidence="3">Belongs to the peptidase S1 family. Snake venom subfamily.</text>
</comment>
<reference key="1">
    <citation type="submission" date="2001-06" db="EMBL/GenBank/DDBJ databases">
        <title>Identification of geographic variations and cloning of venom proteins of Trimeresurus stejnegeri: serine proteases and phospholipases.</title>
        <authorList>
            <person name="Tsai I.-H."/>
            <person name="Wang Y.-M."/>
        </authorList>
    </citation>
    <scope>NUCLEOTIDE SEQUENCE [MRNA]</scope>
    <source>
        <tissue>Venom gland</tissue>
    </source>
</reference>
<evidence type="ECO:0000250" key="1"/>
<evidence type="ECO:0000255" key="2"/>
<evidence type="ECO:0000255" key="3">
    <source>
        <dbReference type="PROSITE-ProRule" id="PRU00274"/>
    </source>
</evidence>
<proteinExistence type="evidence at transcript level"/>
<protein>
    <recommendedName>
        <fullName>Snake venom serine protease KN2</fullName>
        <shortName>SVSP</shortName>
        <ecNumber>3.4.21.-</ecNumber>
    </recommendedName>
</protein>
<dbReference type="EC" id="3.4.21.-"/>
<dbReference type="EMBL" id="AF395767">
    <property type="protein sequence ID" value="AAQ02897.1"/>
    <property type="molecule type" value="mRNA"/>
</dbReference>
<dbReference type="SMR" id="Q71QJ0"/>
<dbReference type="MEROPS" id="S01.497"/>
<dbReference type="GO" id="GO:0005576">
    <property type="term" value="C:extracellular region"/>
    <property type="evidence" value="ECO:0007669"/>
    <property type="project" value="UniProtKB-SubCell"/>
</dbReference>
<dbReference type="GO" id="GO:0030141">
    <property type="term" value="C:secretory granule"/>
    <property type="evidence" value="ECO:0007669"/>
    <property type="project" value="TreeGrafter"/>
</dbReference>
<dbReference type="GO" id="GO:0004252">
    <property type="term" value="F:serine-type endopeptidase activity"/>
    <property type="evidence" value="ECO:0007669"/>
    <property type="project" value="InterPro"/>
</dbReference>
<dbReference type="GO" id="GO:0090729">
    <property type="term" value="F:toxin activity"/>
    <property type="evidence" value="ECO:0007669"/>
    <property type="project" value="UniProtKB-KW"/>
</dbReference>
<dbReference type="GO" id="GO:0006508">
    <property type="term" value="P:proteolysis"/>
    <property type="evidence" value="ECO:0007669"/>
    <property type="project" value="UniProtKB-KW"/>
</dbReference>
<dbReference type="CDD" id="cd00190">
    <property type="entry name" value="Tryp_SPc"/>
    <property type="match status" value="1"/>
</dbReference>
<dbReference type="FunFam" id="2.40.10.10:FF:000158">
    <property type="entry name" value="Thrombin-like enzyme saxthrombin"/>
    <property type="match status" value="1"/>
</dbReference>
<dbReference type="FunFam" id="2.40.10.10:FF:000153">
    <property type="entry name" value="Venom plasminogen activator TSV-PA"/>
    <property type="match status" value="1"/>
</dbReference>
<dbReference type="Gene3D" id="2.40.10.10">
    <property type="entry name" value="Trypsin-like serine proteases"/>
    <property type="match status" value="2"/>
</dbReference>
<dbReference type="InterPro" id="IPR009003">
    <property type="entry name" value="Peptidase_S1_PA"/>
</dbReference>
<dbReference type="InterPro" id="IPR043504">
    <property type="entry name" value="Peptidase_S1_PA_chymotrypsin"/>
</dbReference>
<dbReference type="InterPro" id="IPR001314">
    <property type="entry name" value="Peptidase_S1A"/>
</dbReference>
<dbReference type="InterPro" id="IPR001254">
    <property type="entry name" value="Trypsin_dom"/>
</dbReference>
<dbReference type="InterPro" id="IPR018114">
    <property type="entry name" value="TRYPSIN_HIS"/>
</dbReference>
<dbReference type="InterPro" id="IPR033116">
    <property type="entry name" value="TRYPSIN_SER"/>
</dbReference>
<dbReference type="PANTHER" id="PTHR24271:SF47">
    <property type="entry name" value="KALLIKREIN-1"/>
    <property type="match status" value="1"/>
</dbReference>
<dbReference type="PANTHER" id="PTHR24271">
    <property type="entry name" value="KALLIKREIN-RELATED"/>
    <property type="match status" value="1"/>
</dbReference>
<dbReference type="Pfam" id="PF00089">
    <property type="entry name" value="Trypsin"/>
    <property type="match status" value="1"/>
</dbReference>
<dbReference type="PRINTS" id="PR00722">
    <property type="entry name" value="CHYMOTRYPSIN"/>
</dbReference>
<dbReference type="SMART" id="SM00020">
    <property type="entry name" value="Tryp_SPc"/>
    <property type="match status" value="1"/>
</dbReference>
<dbReference type="SUPFAM" id="SSF50494">
    <property type="entry name" value="Trypsin-like serine proteases"/>
    <property type="match status" value="1"/>
</dbReference>
<dbReference type="PROSITE" id="PS50240">
    <property type="entry name" value="TRYPSIN_DOM"/>
    <property type="match status" value="1"/>
</dbReference>
<dbReference type="PROSITE" id="PS00134">
    <property type="entry name" value="TRYPSIN_HIS"/>
    <property type="match status" value="1"/>
</dbReference>
<dbReference type="PROSITE" id="PS00135">
    <property type="entry name" value="TRYPSIN_SER"/>
    <property type="match status" value="1"/>
</dbReference>
<accession>Q71QJ0</accession>
<keyword id="KW-1015">Disulfide bond</keyword>
<keyword id="KW-0325">Glycoprotein</keyword>
<keyword id="KW-1199">Hemostasis impairing toxin</keyword>
<keyword id="KW-0378">Hydrolase</keyword>
<keyword id="KW-0645">Protease</keyword>
<keyword id="KW-0964">Secreted</keyword>
<keyword id="KW-0720">Serine protease</keyword>
<keyword id="KW-0732">Signal</keyword>
<keyword id="KW-0800">Toxin</keyword>
<keyword id="KW-0865">Zymogen</keyword>
<sequence>MVLIRVLANLLILQLSYAQKSSELVIGGHPCNINEHPFLVLVYHDGYQCGGTLINEEWVLTAAHCDGKKMKLQFGLHSKNVPNKDKQTRVPKEKFFCLSSKNFIKWGKDIMLIRLNRPVNNSTHIAPLSLPSSPPSQNTVCNIMGWGTISPTKEIYPDVPHCANINILDHAVCRAFYPGLLEKSKTLCAGILQGGKDICQGDSGGPLICNGQIQGIVSVGGDPCAEPRVPAIYTKVFDHLDWIKSIIAGNTAATCPL</sequence>